<evidence type="ECO:0000255" key="1">
    <source>
        <dbReference type="HAMAP-Rule" id="MF_01617"/>
    </source>
</evidence>
<gene>
    <name evidence="1" type="primary">fadJ</name>
    <name type="ordered locus">PBPRA0962</name>
</gene>
<proteinExistence type="inferred from homology"/>
<keyword id="KW-0963">Cytoplasm</keyword>
<keyword id="KW-0276">Fatty acid metabolism</keyword>
<keyword id="KW-0413">Isomerase</keyword>
<keyword id="KW-0442">Lipid degradation</keyword>
<keyword id="KW-0443">Lipid metabolism</keyword>
<keyword id="KW-0456">Lyase</keyword>
<keyword id="KW-0511">Multifunctional enzyme</keyword>
<keyword id="KW-0520">NAD</keyword>
<keyword id="KW-0560">Oxidoreductase</keyword>
<keyword id="KW-1185">Reference proteome</keyword>
<organism>
    <name type="scientific">Photobacterium profundum (strain SS9)</name>
    <dbReference type="NCBI Taxonomy" id="298386"/>
    <lineage>
        <taxon>Bacteria</taxon>
        <taxon>Pseudomonadati</taxon>
        <taxon>Pseudomonadota</taxon>
        <taxon>Gammaproteobacteria</taxon>
        <taxon>Vibrionales</taxon>
        <taxon>Vibrionaceae</taxon>
        <taxon>Photobacterium</taxon>
    </lineage>
</organism>
<protein>
    <recommendedName>
        <fullName evidence="1">Fatty acid oxidation complex subunit alpha</fullName>
    </recommendedName>
    <domain>
        <recommendedName>
            <fullName evidence="1">Enoyl-CoA hydratase/3-hydroxybutyryl-CoA epimerase</fullName>
            <ecNumber evidence="1">4.2.1.17</ecNumber>
            <ecNumber evidence="1">5.1.2.3</ecNumber>
        </recommendedName>
    </domain>
    <domain>
        <recommendedName>
            <fullName evidence="1">3-hydroxyacyl-CoA dehydrogenase</fullName>
            <ecNumber evidence="1">1.1.1.35</ecNumber>
        </recommendedName>
    </domain>
</protein>
<name>FADJ_PHOPR</name>
<feature type="chain" id="PRO_0000109302" description="Fatty acid oxidation complex subunit alpha">
    <location>
        <begin position="1"/>
        <end position="715"/>
    </location>
</feature>
<feature type="region of interest" description="Enoyl-CoA hydratase" evidence="1">
    <location>
        <begin position="8"/>
        <end position="197"/>
    </location>
</feature>
<feature type="region of interest" description="3-hydroxyacyl-CoA dehydrogenase" evidence="1">
    <location>
        <begin position="313"/>
        <end position="715"/>
    </location>
</feature>
<feature type="site" description="Important for catalytic activity" evidence="1">
    <location>
        <position position="125"/>
    </location>
</feature>
<feature type="site" description="Important for catalytic activity" evidence="1">
    <location>
        <position position="147"/>
    </location>
</feature>
<sequence>MTQHESANSQPSAFSLTFGDNGVAWLKIDVPNERMNTLQSAFVDQVTDVLAQLKDKKDIKGMVVYSGKPDNFIAGADIRMLAACQTADEAQQLAAKGQELFGQLEALPFHVVAAIHGPCLGGGLELALACHSRVCSDDDKTRLGLPEVQLGLLPGSGGTQRLPRLIGVANALDMILTGKQLRAKKAKNLGLVEEAVPLSILLDIAEKQALKGKPKRKGSFQEWAMGGNALGRSVVFDQAAKKTHEKTRGNYPAADAILDVIKYGLQHGMKKGLDQEAKRFGELVMTSESAALRSIFFATTAMKKESGSDALPATIKKVGVLGGGLMGGGISHVTATKAGYPVRIKDISNDGIKNALVYNFKLLDKQRKRRIISKAELQNKMFSITGGTTFTGFTNVDVVIEAVFEDINLKHQMVKDIEQQTSDYTIFASNTSSLPIHQIAAAAERPENVVGLHYFSPVEKMPLVEVIPHQGTENGSATSEQTIATVVALAKKQGKTPIVVADKAGFYVNRILAPYMNEAAAVLLSGEPIEHIDRSLLDFGFPVGPITLLDEVGVDIGAKISPILLAELGERFKAPDVFDLLLSDDRKGRKSGKGFYLYNTKKKEVDKSVYKLLSLEPEQKAAGQDIALRCTLMMLNEAARCLDEGVIKSARDGDIGAIFGIGFPPFLGGPFRYMDTLGAKRVVEMLKDHTDKYGGRFTPCDKLVAMANEEQSFYS</sequence>
<comment type="function">
    <text evidence="1">Catalyzes the formation of a hydroxyacyl-CoA by addition of water on enoyl-CoA. Also exhibits 3-hydroxyacyl-CoA epimerase and 3-hydroxyacyl-CoA dehydrogenase activities.</text>
</comment>
<comment type="catalytic activity">
    <reaction evidence="1">
        <text>a (3S)-3-hydroxyacyl-CoA = a (2E)-enoyl-CoA + H2O</text>
        <dbReference type="Rhea" id="RHEA:16105"/>
        <dbReference type="ChEBI" id="CHEBI:15377"/>
        <dbReference type="ChEBI" id="CHEBI:57318"/>
        <dbReference type="ChEBI" id="CHEBI:58856"/>
        <dbReference type="EC" id="4.2.1.17"/>
    </reaction>
</comment>
<comment type="catalytic activity">
    <reaction evidence="1">
        <text>a 4-saturated-(3S)-3-hydroxyacyl-CoA = a (3E)-enoyl-CoA + H2O</text>
        <dbReference type="Rhea" id="RHEA:20724"/>
        <dbReference type="ChEBI" id="CHEBI:15377"/>
        <dbReference type="ChEBI" id="CHEBI:58521"/>
        <dbReference type="ChEBI" id="CHEBI:137480"/>
        <dbReference type="EC" id="4.2.1.17"/>
    </reaction>
</comment>
<comment type="catalytic activity">
    <reaction evidence="1">
        <text>a (3S)-3-hydroxyacyl-CoA + NAD(+) = a 3-oxoacyl-CoA + NADH + H(+)</text>
        <dbReference type="Rhea" id="RHEA:22432"/>
        <dbReference type="ChEBI" id="CHEBI:15378"/>
        <dbReference type="ChEBI" id="CHEBI:57318"/>
        <dbReference type="ChEBI" id="CHEBI:57540"/>
        <dbReference type="ChEBI" id="CHEBI:57945"/>
        <dbReference type="ChEBI" id="CHEBI:90726"/>
        <dbReference type="EC" id="1.1.1.35"/>
    </reaction>
</comment>
<comment type="catalytic activity">
    <reaction evidence="1">
        <text>(3S)-3-hydroxybutanoyl-CoA = (3R)-3-hydroxybutanoyl-CoA</text>
        <dbReference type="Rhea" id="RHEA:21760"/>
        <dbReference type="ChEBI" id="CHEBI:57315"/>
        <dbReference type="ChEBI" id="CHEBI:57316"/>
        <dbReference type="EC" id="5.1.2.3"/>
    </reaction>
</comment>
<comment type="pathway">
    <text evidence="1">Lipid metabolism; fatty acid beta-oxidation.</text>
</comment>
<comment type="subunit">
    <text evidence="1">Heterotetramer of two alpha chains (FadJ) and two beta chains (FadI).</text>
</comment>
<comment type="subcellular location">
    <subcellularLocation>
        <location evidence="1">Cytoplasm</location>
    </subcellularLocation>
</comment>
<comment type="similarity">
    <text evidence="1">In the N-terminal section; belongs to the enoyl-CoA hydratase/isomerase family.</text>
</comment>
<comment type="similarity">
    <text evidence="1">In the central section; belongs to the 3-hydroxyacyl-CoA dehydrogenase family.</text>
</comment>
<dbReference type="EC" id="4.2.1.17" evidence="1"/>
<dbReference type="EC" id="5.1.2.3" evidence="1"/>
<dbReference type="EC" id="1.1.1.35" evidence="1"/>
<dbReference type="EMBL" id="CR378666">
    <property type="protein sequence ID" value="CAG19373.1"/>
    <property type="molecule type" value="Genomic_DNA"/>
</dbReference>
<dbReference type="RefSeq" id="WP_011217707.1">
    <property type="nucleotide sequence ID" value="NC_006370.1"/>
</dbReference>
<dbReference type="SMR" id="Q6LTK3"/>
<dbReference type="STRING" id="298386.PBPRA0962"/>
<dbReference type="KEGG" id="ppr:PBPRA0962"/>
<dbReference type="eggNOG" id="COG1024">
    <property type="taxonomic scope" value="Bacteria"/>
</dbReference>
<dbReference type="eggNOG" id="COG1250">
    <property type="taxonomic scope" value="Bacteria"/>
</dbReference>
<dbReference type="HOGENOM" id="CLU_009834_16_1_6"/>
<dbReference type="UniPathway" id="UPA00659"/>
<dbReference type="Proteomes" id="UP000000593">
    <property type="component" value="Chromosome 1"/>
</dbReference>
<dbReference type="GO" id="GO:0005737">
    <property type="term" value="C:cytoplasm"/>
    <property type="evidence" value="ECO:0007669"/>
    <property type="project" value="UniProtKB-SubCell"/>
</dbReference>
<dbReference type="GO" id="GO:0008692">
    <property type="term" value="F:3-hydroxybutyryl-CoA epimerase activity"/>
    <property type="evidence" value="ECO:0007669"/>
    <property type="project" value="UniProtKB-UniRule"/>
</dbReference>
<dbReference type="GO" id="GO:0004300">
    <property type="term" value="F:enoyl-CoA hydratase activity"/>
    <property type="evidence" value="ECO:0007669"/>
    <property type="project" value="UniProtKB-UniRule"/>
</dbReference>
<dbReference type="GO" id="GO:0016509">
    <property type="term" value="F:long-chain-3-hydroxyacyl-CoA dehydrogenase activity"/>
    <property type="evidence" value="ECO:0007669"/>
    <property type="project" value="TreeGrafter"/>
</dbReference>
<dbReference type="GO" id="GO:0070403">
    <property type="term" value="F:NAD+ binding"/>
    <property type="evidence" value="ECO:0007669"/>
    <property type="project" value="InterPro"/>
</dbReference>
<dbReference type="GO" id="GO:0006635">
    <property type="term" value="P:fatty acid beta-oxidation"/>
    <property type="evidence" value="ECO:0007669"/>
    <property type="project" value="UniProtKB-UniRule"/>
</dbReference>
<dbReference type="CDD" id="cd06558">
    <property type="entry name" value="crotonase-like"/>
    <property type="match status" value="1"/>
</dbReference>
<dbReference type="FunFam" id="3.90.226.10:FF:000011">
    <property type="entry name" value="Fatty acid oxidation complex subunit alpha"/>
    <property type="match status" value="1"/>
</dbReference>
<dbReference type="FunFam" id="3.40.50.720:FF:000009">
    <property type="entry name" value="Fatty oxidation complex, alpha subunit"/>
    <property type="match status" value="1"/>
</dbReference>
<dbReference type="Gene3D" id="1.10.1040.50">
    <property type="match status" value="1"/>
</dbReference>
<dbReference type="Gene3D" id="3.90.226.10">
    <property type="entry name" value="2-enoyl-CoA Hydratase, Chain A, domain 1"/>
    <property type="match status" value="1"/>
</dbReference>
<dbReference type="Gene3D" id="3.40.50.720">
    <property type="entry name" value="NAD(P)-binding Rossmann-like Domain"/>
    <property type="match status" value="1"/>
</dbReference>
<dbReference type="HAMAP" id="MF_01617">
    <property type="entry name" value="FadJ"/>
    <property type="match status" value="1"/>
</dbReference>
<dbReference type="InterPro" id="IPR006180">
    <property type="entry name" value="3-OHacyl-CoA_DH_CS"/>
</dbReference>
<dbReference type="InterPro" id="IPR006176">
    <property type="entry name" value="3-OHacyl-CoA_DH_NAD-bd"/>
</dbReference>
<dbReference type="InterPro" id="IPR006108">
    <property type="entry name" value="3HC_DH_C"/>
</dbReference>
<dbReference type="InterPro" id="IPR008927">
    <property type="entry name" value="6-PGluconate_DH-like_C_sf"/>
</dbReference>
<dbReference type="InterPro" id="IPR029045">
    <property type="entry name" value="ClpP/crotonase-like_dom_sf"/>
</dbReference>
<dbReference type="InterPro" id="IPR001753">
    <property type="entry name" value="Enoyl-CoA_hydra/iso"/>
</dbReference>
<dbReference type="InterPro" id="IPR050136">
    <property type="entry name" value="FA_oxidation_alpha_subunit"/>
</dbReference>
<dbReference type="InterPro" id="IPR012802">
    <property type="entry name" value="FadJ"/>
</dbReference>
<dbReference type="InterPro" id="IPR036291">
    <property type="entry name" value="NAD(P)-bd_dom_sf"/>
</dbReference>
<dbReference type="NCBIfam" id="TIGR02440">
    <property type="entry name" value="FadJ"/>
    <property type="match status" value="1"/>
</dbReference>
<dbReference type="NCBIfam" id="NF008363">
    <property type="entry name" value="PRK11154.1"/>
    <property type="match status" value="1"/>
</dbReference>
<dbReference type="PANTHER" id="PTHR43612">
    <property type="entry name" value="TRIFUNCTIONAL ENZYME SUBUNIT ALPHA"/>
    <property type="match status" value="1"/>
</dbReference>
<dbReference type="PANTHER" id="PTHR43612:SF3">
    <property type="entry name" value="TRIFUNCTIONAL ENZYME SUBUNIT ALPHA, MITOCHONDRIAL"/>
    <property type="match status" value="1"/>
</dbReference>
<dbReference type="Pfam" id="PF00725">
    <property type="entry name" value="3HCDH"/>
    <property type="match status" value="1"/>
</dbReference>
<dbReference type="Pfam" id="PF02737">
    <property type="entry name" value="3HCDH_N"/>
    <property type="match status" value="1"/>
</dbReference>
<dbReference type="Pfam" id="PF00378">
    <property type="entry name" value="ECH_1"/>
    <property type="match status" value="1"/>
</dbReference>
<dbReference type="SUPFAM" id="SSF48179">
    <property type="entry name" value="6-phosphogluconate dehydrogenase C-terminal domain-like"/>
    <property type="match status" value="2"/>
</dbReference>
<dbReference type="SUPFAM" id="SSF52096">
    <property type="entry name" value="ClpP/crotonase"/>
    <property type="match status" value="1"/>
</dbReference>
<dbReference type="SUPFAM" id="SSF51735">
    <property type="entry name" value="NAD(P)-binding Rossmann-fold domains"/>
    <property type="match status" value="1"/>
</dbReference>
<dbReference type="PROSITE" id="PS00067">
    <property type="entry name" value="3HCDH"/>
    <property type="match status" value="1"/>
</dbReference>
<accession>Q6LTK3</accession>
<reference key="1">
    <citation type="journal article" date="2005" name="Science">
        <title>Life at depth: Photobacterium profundum genome sequence and expression analysis.</title>
        <authorList>
            <person name="Vezzi A."/>
            <person name="Campanaro S."/>
            <person name="D'Angelo M."/>
            <person name="Simonato F."/>
            <person name="Vitulo N."/>
            <person name="Lauro F.M."/>
            <person name="Cestaro A."/>
            <person name="Malacrida G."/>
            <person name="Simionati B."/>
            <person name="Cannata N."/>
            <person name="Romualdi C."/>
            <person name="Bartlett D.H."/>
            <person name="Valle G."/>
        </authorList>
    </citation>
    <scope>NUCLEOTIDE SEQUENCE [LARGE SCALE GENOMIC DNA]</scope>
    <source>
        <strain>ATCC BAA-1253 / SS9</strain>
    </source>
</reference>